<gene>
    <name evidence="1" type="primary">dnaJ</name>
</gene>
<accession>O08356</accession>
<name>DNAJ_RHOS7</name>
<comment type="function">
    <text evidence="1">Participates actively in the response to hyperosmotic and heat shock by preventing the aggregation of stress-denatured proteins and by disaggregating proteins, also in an autonomous, DnaK-independent fashion. Unfolded proteins bind initially to DnaJ; upon interaction with the DnaJ-bound protein, DnaK hydrolyzes its bound ATP, resulting in the formation of a stable complex. GrpE releases ADP from DnaK; ATP binding to DnaK triggers the release of the substrate protein, thus completing the reaction cycle. Several rounds of ATP-dependent interactions between DnaJ, DnaK and GrpE are required for fully efficient folding. Also involved, together with DnaK and GrpE, in the DNA replication of plasmids through activation of initiation proteins.</text>
</comment>
<comment type="cofactor">
    <cofactor evidence="1">
        <name>Zn(2+)</name>
        <dbReference type="ChEBI" id="CHEBI:29105"/>
    </cofactor>
    <text evidence="1">Binds 2 Zn(2+) ions per monomer.</text>
</comment>
<comment type="subunit">
    <text evidence="1">Homodimer.</text>
</comment>
<comment type="subcellular location">
    <subcellularLocation>
        <location evidence="1">Cytoplasm</location>
    </subcellularLocation>
</comment>
<comment type="domain">
    <text evidence="1">The J domain is necessary and sufficient to stimulate DnaK ATPase activity. Zinc center 1 plays an important role in the autonomous, DnaK-independent chaperone activity of DnaJ. Zinc center 2 is essential for interaction with DnaK and for DnaJ activity.</text>
</comment>
<comment type="similarity">
    <text evidence="1">Belongs to the DnaJ family.</text>
</comment>
<sequence length="379" mass="40992">MSTTKRCYYETLEVERNADDSTLKSAFRKLAMKWHPDRNPGDPQCEIKFKEINEAYEVLKDGDKRAAYDRYGHAAFEQGGFGGGAGFGAGFASSFSDIFEDLFGMAAQRGRGTGRERGADLRYNMEITLEDAFKGKTAQIEIPVSVTCEACSGTGAKAGTKPKTCSTCGGAGRVRQAQGFFTLERTCPSCQGRGQTIEDPCPSCTGSGRVTKERTLSVNIPQGVEDGTRIRLAGEGEAGLRGGPPGDLYIFLSLANHAIFQRDGADLHCRVPISMVTAALGGEFEVPTIDRGKTKVKVPSGTQTGRRFRIAGKGMPVLRSRQVGDMYVQVVVETPQNLTKKQQELLAEFEKLSSGETQPEAVGFFSKVKEFFGSRASAP</sequence>
<dbReference type="EMBL" id="D78133">
    <property type="protein sequence ID" value="BAA19797.1"/>
    <property type="molecule type" value="Genomic_DNA"/>
</dbReference>
<dbReference type="SMR" id="O08356"/>
<dbReference type="GO" id="GO:0005737">
    <property type="term" value="C:cytoplasm"/>
    <property type="evidence" value="ECO:0007669"/>
    <property type="project" value="UniProtKB-SubCell"/>
</dbReference>
<dbReference type="GO" id="GO:0005524">
    <property type="term" value="F:ATP binding"/>
    <property type="evidence" value="ECO:0007669"/>
    <property type="project" value="InterPro"/>
</dbReference>
<dbReference type="GO" id="GO:0031072">
    <property type="term" value="F:heat shock protein binding"/>
    <property type="evidence" value="ECO:0007669"/>
    <property type="project" value="InterPro"/>
</dbReference>
<dbReference type="GO" id="GO:0051082">
    <property type="term" value="F:unfolded protein binding"/>
    <property type="evidence" value="ECO:0007669"/>
    <property type="project" value="UniProtKB-UniRule"/>
</dbReference>
<dbReference type="GO" id="GO:0008270">
    <property type="term" value="F:zinc ion binding"/>
    <property type="evidence" value="ECO:0007669"/>
    <property type="project" value="UniProtKB-UniRule"/>
</dbReference>
<dbReference type="GO" id="GO:0051085">
    <property type="term" value="P:chaperone cofactor-dependent protein refolding"/>
    <property type="evidence" value="ECO:0007669"/>
    <property type="project" value="TreeGrafter"/>
</dbReference>
<dbReference type="GO" id="GO:0006260">
    <property type="term" value="P:DNA replication"/>
    <property type="evidence" value="ECO:0007669"/>
    <property type="project" value="UniProtKB-KW"/>
</dbReference>
<dbReference type="GO" id="GO:0042026">
    <property type="term" value="P:protein refolding"/>
    <property type="evidence" value="ECO:0007669"/>
    <property type="project" value="TreeGrafter"/>
</dbReference>
<dbReference type="GO" id="GO:0009408">
    <property type="term" value="P:response to heat"/>
    <property type="evidence" value="ECO:0007669"/>
    <property type="project" value="InterPro"/>
</dbReference>
<dbReference type="CDD" id="cd06257">
    <property type="entry name" value="DnaJ"/>
    <property type="match status" value="1"/>
</dbReference>
<dbReference type="CDD" id="cd10747">
    <property type="entry name" value="DnaJ_C"/>
    <property type="match status" value="1"/>
</dbReference>
<dbReference type="CDD" id="cd10719">
    <property type="entry name" value="DnaJ_zf"/>
    <property type="match status" value="1"/>
</dbReference>
<dbReference type="FunFam" id="1.10.287.110:FF:000034">
    <property type="entry name" value="Chaperone protein DnaJ"/>
    <property type="match status" value="1"/>
</dbReference>
<dbReference type="FunFam" id="2.10.230.10:FF:000002">
    <property type="entry name" value="Molecular chaperone DnaJ"/>
    <property type="match status" value="1"/>
</dbReference>
<dbReference type="FunFam" id="2.60.260.20:FF:000004">
    <property type="entry name" value="Molecular chaperone DnaJ"/>
    <property type="match status" value="1"/>
</dbReference>
<dbReference type="Gene3D" id="1.10.287.110">
    <property type="entry name" value="DnaJ domain"/>
    <property type="match status" value="1"/>
</dbReference>
<dbReference type="Gene3D" id="2.10.230.10">
    <property type="entry name" value="Heat shock protein DnaJ, cysteine-rich domain"/>
    <property type="match status" value="1"/>
</dbReference>
<dbReference type="Gene3D" id="2.60.260.20">
    <property type="entry name" value="Urease metallochaperone UreE, N-terminal domain"/>
    <property type="match status" value="2"/>
</dbReference>
<dbReference type="HAMAP" id="MF_01152">
    <property type="entry name" value="DnaJ"/>
    <property type="match status" value="1"/>
</dbReference>
<dbReference type="InterPro" id="IPR012724">
    <property type="entry name" value="DnaJ"/>
</dbReference>
<dbReference type="InterPro" id="IPR002939">
    <property type="entry name" value="DnaJ_C"/>
</dbReference>
<dbReference type="InterPro" id="IPR001623">
    <property type="entry name" value="DnaJ_domain"/>
</dbReference>
<dbReference type="InterPro" id="IPR018253">
    <property type="entry name" value="DnaJ_domain_CS"/>
</dbReference>
<dbReference type="InterPro" id="IPR008971">
    <property type="entry name" value="HSP40/DnaJ_pept-bd"/>
</dbReference>
<dbReference type="InterPro" id="IPR001305">
    <property type="entry name" value="HSP_DnaJ_Cys-rich_dom"/>
</dbReference>
<dbReference type="InterPro" id="IPR036410">
    <property type="entry name" value="HSP_DnaJ_Cys-rich_dom_sf"/>
</dbReference>
<dbReference type="InterPro" id="IPR036869">
    <property type="entry name" value="J_dom_sf"/>
</dbReference>
<dbReference type="NCBIfam" id="TIGR02349">
    <property type="entry name" value="DnaJ_bact"/>
    <property type="match status" value="1"/>
</dbReference>
<dbReference type="NCBIfam" id="NF008035">
    <property type="entry name" value="PRK10767.1"/>
    <property type="match status" value="1"/>
</dbReference>
<dbReference type="PANTHER" id="PTHR43096:SF48">
    <property type="entry name" value="CHAPERONE PROTEIN DNAJ"/>
    <property type="match status" value="1"/>
</dbReference>
<dbReference type="PANTHER" id="PTHR43096">
    <property type="entry name" value="DNAJ HOMOLOG 1, MITOCHONDRIAL-RELATED"/>
    <property type="match status" value="1"/>
</dbReference>
<dbReference type="Pfam" id="PF00226">
    <property type="entry name" value="DnaJ"/>
    <property type="match status" value="1"/>
</dbReference>
<dbReference type="Pfam" id="PF01556">
    <property type="entry name" value="DnaJ_C"/>
    <property type="match status" value="1"/>
</dbReference>
<dbReference type="Pfam" id="PF00684">
    <property type="entry name" value="DnaJ_CXXCXGXG"/>
    <property type="match status" value="1"/>
</dbReference>
<dbReference type="PRINTS" id="PR00625">
    <property type="entry name" value="JDOMAIN"/>
</dbReference>
<dbReference type="SMART" id="SM00271">
    <property type="entry name" value="DnaJ"/>
    <property type="match status" value="1"/>
</dbReference>
<dbReference type="SUPFAM" id="SSF46565">
    <property type="entry name" value="Chaperone J-domain"/>
    <property type="match status" value="1"/>
</dbReference>
<dbReference type="SUPFAM" id="SSF57938">
    <property type="entry name" value="DnaJ/Hsp40 cysteine-rich domain"/>
    <property type="match status" value="1"/>
</dbReference>
<dbReference type="SUPFAM" id="SSF49493">
    <property type="entry name" value="HSP40/DnaJ peptide-binding domain"/>
    <property type="match status" value="2"/>
</dbReference>
<dbReference type="PROSITE" id="PS00636">
    <property type="entry name" value="DNAJ_1"/>
    <property type="match status" value="1"/>
</dbReference>
<dbReference type="PROSITE" id="PS50076">
    <property type="entry name" value="DNAJ_2"/>
    <property type="match status" value="1"/>
</dbReference>
<dbReference type="PROSITE" id="PS51188">
    <property type="entry name" value="ZF_CR"/>
    <property type="match status" value="1"/>
</dbReference>
<protein>
    <recommendedName>
        <fullName evidence="1">Chaperone protein DnaJ</fullName>
    </recommendedName>
</protein>
<reference key="1">
    <citation type="journal article" date="1997" name="Biochim. Biophys. Acta">
        <title>Cloning of dnaK and dnaJ homologous genes from a purple non-sulfur bacterium Rhodopseudomonas species.</title>
        <authorList>
            <person name="Momma K."/>
            <person name="Inui M."/>
            <person name="Yamagata H."/>
            <person name="Yukawa H."/>
        </authorList>
    </citation>
    <scope>NUCLEOTIDE SEQUENCE [GENOMIC DNA]</scope>
</reference>
<keyword id="KW-0143">Chaperone</keyword>
<keyword id="KW-0963">Cytoplasm</keyword>
<keyword id="KW-0235">DNA replication</keyword>
<keyword id="KW-0479">Metal-binding</keyword>
<keyword id="KW-0677">Repeat</keyword>
<keyword id="KW-0346">Stress response</keyword>
<keyword id="KW-0862">Zinc</keyword>
<keyword id="KW-0863">Zinc-finger</keyword>
<evidence type="ECO:0000255" key="1">
    <source>
        <dbReference type="HAMAP-Rule" id="MF_01152"/>
    </source>
</evidence>
<feature type="chain" id="PRO_0000070870" description="Chaperone protein DnaJ">
    <location>
        <begin position="1"/>
        <end position="379"/>
    </location>
</feature>
<feature type="domain" description="J" evidence="1">
    <location>
        <begin position="7"/>
        <end position="72"/>
    </location>
</feature>
<feature type="repeat" description="CXXCXGXG motif">
    <location>
        <begin position="148"/>
        <end position="155"/>
    </location>
</feature>
<feature type="repeat" description="CXXCXGXG motif">
    <location>
        <begin position="165"/>
        <end position="172"/>
    </location>
</feature>
<feature type="repeat" description="CXXCXGXG motif">
    <location>
        <begin position="187"/>
        <end position="194"/>
    </location>
</feature>
<feature type="repeat" description="CXXCXGXG motif">
    <location>
        <begin position="201"/>
        <end position="208"/>
    </location>
</feature>
<feature type="zinc finger region" description="CR-type" evidence="1">
    <location>
        <begin position="135"/>
        <end position="213"/>
    </location>
</feature>
<feature type="binding site" evidence="1">
    <location>
        <position position="148"/>
    </location>
    <ligand>
        <name>Zn(2+)</name>
        <dbReference type="ChEBI" id="CHEBI:29105"/>
        <label>1</label>
    </ligand>
</feature>
<feature type="binding site" evidence="1">
    <location>
        <position position="151"/>
    </location>
    <ligand>
        <name>Zn(2+)</name>
        <dbReference type="ChEBI" id="CHEBI:29105"/>
        <label>1</label>
    </ligand>
</feature>
<feature type="binding site" evidence="1">
    <location>
        <position position="165"/>
    </location>
    <ligand>
        <name>Zn(2+)</name>
        <dbReference type="ChEBI" id="CHEBI:29105"/>
        <label>2</label>
    </ligand>
</feature>
<feature type="binding site" evidence="1">
    <location>
        <position position="168"/>
    </location>
    <ligand>
        <name>Zn(2+)</name>
        <dbReference type="ChEBI" id="CHEBI:29105"/>
        <label>2</label>
    </ligand>
</feature>
<feature type="binding site" evidence="1">
    <location>
        <position position="187"/>
    </location>
    <ligand>
        <name>Zn(2+)</name>
        <dbReference type="ChEBI" id="CHEBI:29105"/>
        <label>2</label>
    </ligand>
</feature>
<feature type="binding site" evidence="1">
    <location>
        <position position="190"/>
    </location>
    <ligand>
        <name>Zn(2+)</name>
        <dbReference type="ChEBI" id="CHEBI:29105"/>
        <label>2</label>
    </ligand>
</feature>
<feature type="binding site" evidence="1">
    <location>
        <position position="201"/>
    </location>
    <ligand>
        <name>Zn(2+)</name>
        <dbReference type="ChEBI" id="CHEBI:29105"/>
        <label>1</label>
    </ligand>
</feature>
<feature type="binding site" evidence="1">
    <location>
        <position position="204"/>
    </location>
    <ligand>
        <name>Zn(2+)</name>
        <dbReference type="ChEBI" id="CHEBI:29105"/>
        <label>1</label>
    </ligand>
</feature>
<proteinExistence type="inferred from homology"/>
<organism>
    <name type="scientific">Rhodopseudomonas sp. (strain No.7)</name>
    <dbReference type="NCBI Taxonomy" id="269092"/>
    <lineage>
        <taxon>Bacteria</taxon>
        <taxon>Pseudomonadati</taxon>
        <taxon>Pseudomonadota</taxon>
        <taxon>Alphaproteobacteria</taxon>
        <taxon>Hyphomicrobiales</taxon>
        <taxon>Nitrobacteraceae</taxon>
        <taxon>Rhodopseudomonas</taxon>
    </lineage>
</organism>